<dbReference type="EMBL" id="CP000768">
    <property type="protein sequence ID" value="ABS43207.1"/>
    <property type="molecule type" value="Genomic_DNA"/>
</dbReference>
<dbReference type="SMR" id="A7H2J8"/>
<dbReference type="KEGG" id="cjd:JJD26997_0553"/>
<dbReference type="HOGENOM" id="CLU_086034_5_4_7"/>
<dbReference type="Proteomes" id="UP000002302">
    <property type="component" value="Chromosome"/>
</dbReference>
<dbReference type="GO" id="GO:0033281">
    <property type="term" value="C:TAT protein transport complex"/>
    <property type="evidence" value="ECO:0007669"/>
    <property type="project" value="UniProtKB-UniRule"/>
</dbReference>
<dbReference type="GO" id="GO:0008320">
    <property type="term" value="F:protein transmembrane transporter activity"/>
    <property type="evidence" value="ECO:0007669"/>
    <property type="project" value="UniProtKB-UniRule"/>
</dbReference>
<dbReference type="GO" id="GO:0043953">
    <property type="term" value="P:protein transport by the Tat complex"/>
    <property type="evidence" value="ECO:0007669"/>
    <property type="project" value="UniProtKB-UniRule"/>
</dbReference>
<dbReference type="Gene3D" id="1.20.5.3310">
    <property type="match status" value="1"/>
</dbReference>
<dbReference type="HAMAP" id="MF_00236">
    <property type="entry name" value="TatA_E"/>
    <property type="match status" value="1"/>
</dbReference>
<dbReference type="InterPro" id="IPR003369">
    <property type="entry name" value="TatA/B/E"/>
</dbReference>
<dbReference type="InterPro" id="IPR006312">
    <property type="entry name" value="TatA/E"/>
</dbReference>
<dbReference type="NCBIfam" id="TIGR01411">
    <property type="entry name" value="tatAE"/>
    <property type="match status" value="1"/>
</dbReference>
<dbReference type="PANTHER" id="PTHR42982">
    <property type="entry name" value="SEC-INDEPENDENT PROTEIN TRANSLOCASE PROTEIN TATA"/>
    <property type="match status" value="1"/>
</dbReference>
<dbReference type="PANTHER" id="PTHR42982:SF1">
    <property type="entry name" value="SEC-INDEPENDENT PROTEIN TRANSLOCASE PROTEIN TATA"/>
    <property type="match status" value="1"/>
</dbReference>
<dbReference type="Pfam" id="PF02416">
    <property type="entry name" value="TatA_B_E"/>
    <property type="match status" value="1"/>
</dbReference>
<evidence type="ECO:0000255" key="1">
    <source>
        <dbReference type="HAMAP-Rule" id="MF_00236"/>
    </source>
</evidence>
<evidence type="ECO:0000256" key="2">
    <source>
        <dbReference type="SAM" id="MobiDB-lite"/>
    </source>
</evidence>
<sequence length="79" mass="8685">MGGWSSPSHWLIILLIVVLLFGAKKIPELAKGLGKGIKTFKDEMNNDDEVAKNTQKIEENKNTTNNTNADASIDETKKA</sequence>
<feature type="chain" id="PRO_1000044376" description="Sec-independent protein translocase protein TatA">
    <location>
        <begin position="1"/>
        <end position="79"/>
    </location>
</feature>
<feature type="transmembrane region" description="Helical" evidence="1">
    <location>
        <begin position="1"/>
        <end position="21"/>
    </location>
</feature>
<feature type="region of interest" description="Disordered" evidence="2">
    <location>
        <begin position="49"/>
        <end position="79"/>
    </location>
</feature>
<feature type="compositionally biased region" description="Basic and acidic residues" evidence="2">
    <location>
        <begin position="49"/>
        <end position="61"/>
    </location>
</feature>
<gene>
    <name evidence="1" type="primary">tatA</name>
    <name type="ordered locus">JJD26997_0553</name>
</gene>
<proteinExistence type="inferred from homology"/>
<name>TATA_CAMJD</name>
<comment type="function">
    <text evidence="1">Part of the twin-arginine translocation (Tat) system that transports large folded proteins containing a characteristic twin-arginine motif in their signal peptide across membranes. TatA could form the protein-conducting channel of the Tat system.</text>
</comment>
<comment type="subunit">
    <text evidence="1">The Tat system comprises two distinct complexes: a TatABC complex, containing multiple copies of TatA, TatB and TatC subunits, and a separate TatA complex, containing only TatA subunits. Substrates initially bind to the TatABC complex, which probably triggers association of the separate TatA complex to form the active translocon.</text>
</comment>
<comment type="subcellular location">
    <subcellularLocation>
        <location evidence="1">Cell inner membrane</location>
        <topology evidence="1">Single-pass membrane protein</topology>
    </subcellularLocation>
</comment>
<comment type="similarity">
    <text evidence="1">Belongs to the TatA/E family.</text>
</comment>
<accession>A7H2J8</accession>
<protein>
    <recommendedName>
        <fullName evidence="1">Sec-independent protein translocase protein TatA</fullName>
    </recommendedName>
</protein>
<keyword id="KW-0997">Cell inner membrane</keyword>
<keyword id="KW-1003">Cell membrane</keyword>
<keyword id="KW-0472">Membrane</keyword>
<keyword id="KW-0653">Protein transport</keyword>
<keyword id="KW-0811">Translocation</keyword>
<keyword id="KW-0812">Transmembrane</keyword>
<keyword id="KW-1133">Transmembrane helix</keyword>
<keyword id="KW-0813">Transport</keyword>
<organism>
    <name type="scientific">Campylobacter jejuni subsp. doylei (strain ATCC BAA-1458 / RM4099 / 269.97)</name>
    <dbReference type="NCBI Taxonomy" id="360109"/>
    <lineage>
        <taxon>Bacteria</taxon>
        <taxon>Pseudomonadati</taxon>
        <taxon>Campylobacterota</taxon>
        <taxon>Epsilonproteobacteria</taxon>
        <taxon>Campylobacterales</taxon>
        <taxon>Campylobacteraceae</taxon>
        <taxon>Campylobacter</taxon>
    </lineage>
</organism>
<reference key="1">
    <citation type="submission" date="2007-07" db="EMBL/GenBank/DDBJ databases">
        <title>Complete genome sequence of Campylobacter jejuni subsp doylei 269.97 isolated from human blood.</title>
        <authorList>
            <person name="Fouts D.E."/>
            <person name="Mongodin E.F."/>
            <person name="Puiu D."/>
            <person name="Sebastian Y."/>
            <person name="Miller W.G."/>
            <person name="Mandrell R.E."/>
            <person name="Lastovica A.J."/>
            <person name="Nelson K.E."/>
        </authorList>
    </citation>
    <scope>NUCLEOTIDE SEQUENCE [LARGE SCALE GENOMIC DNA]</scope>
    <source>
        <strain>ATCC BAA-1458 / RM4099 / 269.97</strain>
    </source>
</reference>